<gene>
    <name evidence="1" type="primary">trpD</name>
    <name type="ordered locus">MTH_1661</name>
</gene>
<keyword id="KW-0028">Amino-acid biosynthesis</keyword>
<keyword id="KW-0057">Aromatic amino acid biosynthesis</keyword>
<keyword id="KW-0328">Glycosyltransferase</keyword>
<keyword id="KW-0460">Magnesium</keyword>
<keyword id="KW-0479">Metal-binding</keyword>
<keyword id="KW-1185">Reference proteome</keyword>
<keyword id="KW-0808">Transferase</keyword>
<keyword id="KW-0822">Tryptophan biosynthesis</keyword>
<protein>
    <recommendedName>
        <fullName evidence="1">Anthranilate phosphoribosyltransferase</fullName>
        <ecNumber evidence="1">2.4.2.18</ecNumber>
    </recommendedName>
</protein>
<feature type="chain" id="PRO_0000154515" description="Anthranilate phosphoribosyltransferase">
    <location>
        <begin position="1"/>
        <end position="352"/>
    </location>
</feature>
<feature type="binding site" evidence="1">
    <location>
        <position position="82"/>
    </location>
    <ligand>
        <name>5-phospho-alpha-D-ribose 1-diphosphate</name>
        <dbReference type="ChEBI" id="CHEBI:58017"/>
    </ligand>
</feature>
<feature type="binding site" evidence="1">
    <location>
        <position position="82"/>
    </location>
    <ligand>
        <name>anthranilate</name>
        <dbReference type="ChEBI" id="CHEBI:16567"/>
        <label>1</label>
    </ligand>
</feature>
<feature type="binding site" evidence="1">
    <location>
        <begin position="85"/>
        <end position="86"/>
    </location>
    <ligand>
        <name>5-phospho-alpha-D-ribose 1-diphosphate</name>
        <dbReference type="ChEBI" id="CHEBI:58017"/>
    </ligand>
</feature>
<feature type="binding site" evidence="1">
    <location>
        <position position="90"/>
    </location>
    <ligand>
        <name>5-phospho-alpha-D-ribose 1-diphosphate</name>
        <dbReference type="ChEBI" id="CHEBI:58017"/>
    </ligand>
</feature>
<feature type="binding site" evidence="1">
    <location>
        <begin position="92"/>
        <end position="95"/>
    </location>
    <ligand>
        <name>5-phospho-alpha-D-ribose 1-diphosphate</name>
        <dbReference type="ChEBI" id="CHEBI:58017"/>
    </ligand>
</feature>
<feature type="binding site" evidence="1">
    <location>
        <position position="94"/>
    </location>
    <ligand>
        <name>Mg(2+)</name>
        <dbReference type="ChEBI" id="CHEBI:18420"/>
        <label>1</label>
    </ligand>
</feature>
<feature type="binding site" evidence="1">
    <location>
        <begin position="110"/>
        <end position="118"/>
    </location>
    <ligand>
        <name>5-phospho-alpha-D-ribose 1-diphosphate</name>
        <dbReference type="ChEBI" id="CHEBI:58017"/>
    </ligand>
</feature>
<feature type="binding site" evidence="1">
    <location>
        <position position="113"/>
    </location>
    <ligand>
        <name>anthranilate</name>
        <dbReference type="ChEBI" id="CHEBI:16567"/>
        <label>1</label>
    </ligand>
</feature>
<feature type="binding site" evidence="1">
    <location>
        <position position="122"/>
    </location>
    <ligand>
        <name>5-phospho-alpha-D-ribose 1-diphosphate</name>
        <dbReference type="ChEBI" id="CHEBI:58017"/>
    </ligand>
</feature>
<feature type="binding site" evidence="1">
    <location>
        <position position="168"/>
    </location>
    <ligand>
        <name>anthranilate</name>
        <dbReference type="ChEBI" id="CHEBI:16567"/>
        <label>2</label>
    </ligand>
</feature>
<feature type="binding site" evidence="1">
    <location>
        <position position="232"/>
    </location>
    <ligand>
        <name>Mg(2+)</name>
        <dbReference type="ChEBI" id="CHEBI:18420"/>
        <label>2</label>
    </ligand>
</feature>
<feature type="binding site" evidence="1">
    <location>
        <position position="233"/>
    </location>
    <ligand>
        <name>Mg(2+)</name>
        <dbReference type="ChEBI" id="CHEBI:18420"/>
        <label>1</label>
    </ligand>
</feature>
<feature type="binding site" evidence="1">
    <location>
        <position position="233"/>
    </location>
    <ligand>
        <name>Mg(2+)</name>
        <dbReference type="ChEBI" id="CHEBI:18420"/>
        <label>2</label>
    </ligand>
</feature>
<organism>
    <name type="scientific">Methanothermobacter thermautotrophicus (strain ATCC 29096 / DSM 1053 / JCM 10044 / NBRC 100330 / Delta H)</name>
    <name type="common">Methanobacterium thermoautotrophicum</name>
    <dbReference type="NCBI Taxonomy" id="187420"/>
    <lineage>
        <taxon>Archaea</taxon>
        <taxon>Methanobacteriati</taxon>
        <taxon>Methanobacteriota</taxon>
        <taxon>Methanomada group</taxon>
        <taxon>Methanobacteria</taxon>
        <taxon>Methanobacteriales</taxon>
        <taxon>Methanobacteriaceae</taxon>
        <taxon>Methanothermobacter</taxon>
    </lineage>
</organism>
<accession>O27698</accession>
<proteinExistence type="inferred from homology"/>
<dbReference type="EC" id="2.4.2.18" evidence="1"/>
<dbReference type="EMBL" id="AE000666">
    <property type="protein sequence ID" value="AAB86133.1"/>
    <property type="molecule type" value="Genomic_DNA"/>
</dbReference>
<dbReference type="PIR" id="B69089">
    <property type="entry name" value="B69089"/>
</dbReference>
<dbReference type="RefSeq" id="WP_010877269.1">
    <property type="nucleotide sequence ID" value="NC_000916.1"/>
</dbReference>
<dbReference type="SMR" id="O27698"/>
<dbReference type="FunCoup" id="O27698">
    <property type="interactions" value="116"/>
</dbReference>
<dbReference type="STRING" id="187420.MTH_1661"/>
<dbReference type="PaxDb" id="187420-MTH_1661"/>
<dbReference type="EnsemblBacteria" id="AAB86133">
    <property type="protein sequence ID" value="AAB86133"/>
    <property type="gene ID" value="MTH_1661"/>
</dbReference>
<dbReference type="GeneID" id="1470746"/>
<dbReference type="KEGG" id="mth:MTH_1661"/>
<dbReference type="PATRIC" id="fig|187420.15.peg.1623"/>
<dbReference type="HOGENOM" id="CLU_034315_2_1_2"/>
<dbReference type="InParanoid" id="O27698"/>
<dbReference type="UniPathway" id="UPA00035">
    <property type="reaction ID" value="UER00041"/>
</dbReference>
<dbReference type="Proteomes" id="UP000005223">
    <property type="component" value="Chromosome"/>
</dbReference>
<dbReference type="GO" id="GO:0005829">
    <property type="term" value="C:cytosol"/>
    <property type="evidence" value="ECO:0007669"/>
    <property type="project" value="TreeGrafter"/>
</dbReference>
<dbReference type="GO" id="GO:0004048">
    <property type="term" value="F:anthranilate phosphoribosyltransferase activity"/>
    <property type="evidence" value="ECO:0007669"/>
    <property type="project" value="UniProtKB-UniRule"/>
</dbReference>
<dbReference type="GO" id="GO:0000287">
    <property type="term" value="F:magnesium ion binding"/>
    <property type="evidence" value="ECO:0007669"/>
    <property type="project" value="UniProtKB-UniRule"/>
</dbReference>
<dbReference type="GO" id="GO:0000162">
    <property type="term" value="P:L-tryptophan biosynthetic process"/>
    <property type="evidence" value="ECO:0007669"/>
    <property type="project" value="UniProtKB-UniRule"/>
</dbReference>
<dbReference type="FunFam" id="3.40.1030.10:FF:000002">
    <property type="entry name" value="Anthranilate phosphoribosyltransferase"/>
    <property type="match status" value="1"/>
</dbReference>
<dbReference type="Gene3D" id="3.40.1030.10">
    <property type="entry name" value="Nucleoside phosphorylase/phosphoribosyltransferase catalytic domain"/>
    <property type="match status" value="1"/>
</dbReference>
<dbReference type="Gene3D" id="1.20.970.10">
    <property type="entry name" value="Transferase, Pyrimidine Nucleoside Phosphorylase, Chain C"/>
    <property type="match status" value="1"/>
</dbReference>
<dbReference type="HAMAP" id="MF_00211">
    <property type="entry name" value="TrpD"/>
    <property type="match status" value="1"/>
</dbReference>
<dbReference type="InterPro" id="IPR005940">
    <property type="entry name" value="Anthranilate_Pribosyl_Tfrase"/>
</dbReference>
<dbReference type="InterPro" id="IPR000312">
    <property type="entry name" value="Glycosyl_Trfase_fam3"/>
</dbReference>
<dbReference type="InterPro" id="IPR017459">
    <property type="entry name" value="Glycosyl_Trfase_fam3_N_dom"/>
</dbReference>
<dbReference type="InterPro" id="IPR036320">
    <property type="entry name" value="Glycosyl_Trfase_fam3_N_dom_sf"/>
</dbReference>
<dbReference type="InterPro" id="IPR035902">
    <property type="entry name" value="Nuc_phospho_transferase"/>
</dbReference>
<dbReference type="NCBIfam" id="TIGR01245">
    <property type="entry name" value="trpD"/>
    <property type="match status" value="1"/>
</dbReference>
<dbReference type="PANTHER" id="PTHR43285">
    <property type="entry name" value="ANTHRANILATE PHOSPHORIBOSYLTRANSFERASE"/>
    <property type="match status" value="1"/>
</dbReference>
<dbReference type="PANTHER" id="PTHR43285:SF2">
    <property type="entry name" value="ANTHRANILATE PHOSPHORIBOSYLTRANSFERASE"/>
    <property type="match status" value="1"/>
</dbReference>
<dbReference type="Pfam" id="PF02885">
    <property type="entry name" value="Glycos_trans_3N"/>
    <property type="match status" value="1"/>
</dbReference>
<dbReference type="Pfam" id="PF00591">
    <property type="entry name" value="Glycos_transf_3"/>
    <property type="match status" value="1"/>
</dbReference>
<dbReference type="SUPFAM" id="SSF52418">
    <property type="entry name" value="Nucleoside phosphorylase/phosphoribosyltransferase catalytic domain"/>
    <property type="match status" value="1"/>
</dbReference>
<dbReference type="SUPFAM" id="SSF47648">
    <property type="entry name" value="Nucleoside phosphorylase/phosphoribosyltransferase N-terminal domain"/>
    <property type="match status" value="1"/>
</dbReference>
<comment type="function">
    <text evidence="1">Catalyzes the transfer of the phosphoribosyl group of 5-phosphorylribose-1-pyrophosphate (PRPP) to anthranilate to yield N-(5'-phosphoribosyl)-anthranilate (PRA).</text>
</comment>
<comment type="catalytic activity">
    <reaction evidence="1">
        <text>N-(5-phospho-beta-D-ribosyl)anthranilate + diphosphate = 5-phospho-alpha-D-ribose 1-diphosphate + anthranilate</text>
        <dbReference type="Rhea" id="RHEA:11768"/>
        <dbReference type="ChEBI" id="CHEBI:16567"/>
        <dbReference type="ChEBI" id="CHEBI:18277"/>
        <dbReference type="ChEBI" id="CHEBI:33019"/>
        <dbReference type="ChEBI" id="CHEBI:58017"/>
        <dbReference type="EC" id="2.4.2.18"/>
    </reaction>
</comment>
<comment type="cofactor">
    <cofactor evidence="1">
        <name>Mg(2+)</name>
        <dbReference type="ChEBI" id="CHEBI:18420"/>
    </cofactor>
    <text evidence="1">Binds 2 magnesium ions per monomer.</text>
</comment>
<comment type="pathway">
    <text evidence="1">Amino-acid biosynthesis; L-tryptophan biosynthesis; L-tryptophan from chorismate: step 2/5.</text>
</comment>
<comment type="subunit">
    <text evidence="1">Homodimer.</text>
</comment>
<comment type="similarity">
    <text evidence="1">Belongs to the anthranilate phosphoribosyltransferase family.</text>
</comment>
<evidence type="ECO:0000255" key="1">
    <source>
        <dbReference type="HAMAP-Rule" id="MF_00211"/>
    </source>
</evidence>
<name>TRPD_METTH</name>
<reference key="1">
    <citation type="journal article" date="1997" name="J. Bacteriol.">
        <title>Complete genome sequence of Methanobacterium thermoautotrophicum deltaH: functional analysis and comparative genomics.</title>
        <authorList>
            <person name="Smith D.R."/>
            <person name="Doucette-Stamm L.A."/>
            <person name="Deloughery C."/>
            <person name="Lee H.-M."/>
            <person name="Dubois J."/>
            <person name="Aldredge T."/>
            <person name="Bashirzadeh R."/>
            <person name="Blakely D."/>
            <person name="Cook R."/>
            <person name="Gilbert K."/>
            <person name="Harrison D."/>
            <person name="Hoang L."/>
            <person name="Keagle P."/>
            <person name="Lumm W."/>
            <person name="Pothier B."/>
            <person name="Qiu D."/>
            <person name="Spadafora R."/>
            <person name="Vicare R."/>
            <person name="Wang Y."/>
            <person name="Wierzbowski J."/>
            <person name="Gibson R."/>
            <person name="Jiwani N."/>
            <person name="Caruso A."/>
            <person name="Bush D."/>
            <person name="Safer H."/>
            <person name="Patwell D."/>
            <person name="Prabhakar S."/>
            <person name="McDougall S."/>
            <person name="Shimer G."/>
            <person name="Goyal A."/>
            <person name="Pietrovski S."/>
            <person name="Church G.M."/>
            <person name="Daniels C.J."/>
            <person name="Mao J.-I."/>
            <person name="Rice P."/>
            <person name="Noelling J."/>
            <person name="Reeve J.N."/>
        </authorList>
    </citation>
    <scope>NUCLEOTIDE SEQUENCE [LARGE SCALE GENOMIC DNA]</scope>
    <source>
        <strain>ATCC 29096 / DSM 1053 / JCM 10044 / NBRC 100330 / Delta H</strain>
    </source>
</reference>
<sequence length="352" mass="37534">MKFRRMISEIMDFRNLSEDEAYSLMEMIMAGELDDIKIAAILTALAMKGETVDEITGFARAMRDRSPRVRVSGSHEVVDSCGTGGDSFRSYNISTAAAMIAAAAGVRVAKHGNRAVTGSCGGADILEAAGVNIELDAAAAARSLSDVGISFMFAPLFHRATARVAAVRRSLGFKTVFNILGPLTSPAAAGIQLLGVFDPQLVGPVAEVLRNLGTRCAMVVHGFDANLNPALDEISTVGPTLVAFLEDDEIRIDRLMPPDFGVEVGELEHLRAGSTTAENLELFMDVLRGREDTPEQKSRLDIALANAGALIYLAGLADTLPEGTETAKRTVKSGAALELLEEFVSYTRNLQS</sequence>